<dbReference type="EMBL" id="CP000058">
    <property type="protein sequence ID" value="AAZ36066.1"/>
    <property type="molecule type" value="Genomic_DNA"/>
</dbReference>
<dbReference type="RefSeq" id="WP_004663183.1">
    <property type="nucleotide sequence ID" value="NC_005773.3"/>
</dbReference>
<dbReference type="SMR" id="Q48BY8"/>
<dbReference type="GeneID" id="61867481"/>
<dbReference type="KEGG" id="psp:PSPPH_5021"/>
<dbReference type="eggNOG" id="COG1281">
    <property type="taxonomic scope" value="Bacteria"/>
</dbReference>
<dbReference type="HOGENOM" id="CLU_054493_0_0_6"/>
<dbReference type="Proteomes" id="UP000000551">
    <property type="component" value="Chromosome"/>
</dbReference>
<dbReference type="GO" id="GO:0005737">
    <property type="term" value="C:cytoplasm"/>
    <property type="evidence" value="ECO:0007669"/>
    <property type="project" value="UniProtKB-SubCell"/>
</dbReference>
<dbReference type="GO" id="GO:0044183">
    <property type="term" value="F:protein folding chaperone"/>
    <property type="evidence" value="ECO:0007669"/>
    <property type="project" value="TreeGrafter"/>
</dbReference>
<dbReference type="GO" id="GO:0051082">
    <property type="term" value="F:unfolded protein binding"/>
    <property type="evidence" value="ECO:0007669"/>
    <property type="project" value="UniProtKB-UniRule"/>
</dbReference>
<dbReference type="GO" id="GO:0042026">
    <property type="term" value="P:protein refolding"/>
    <property type="evidence" value="ECO:0007669"/>
    <property type="project" value="TreeGrafter"/>
</dbReference>
<dbReference type="CDD" id="cd00498">
    <property type="entry name" value="Hsp33"/>
    <property type="match status" value="1"/>
</dbReference>
<dbReference type="Gene3D" id="1.10.287.480">
    <property type="entry name" value="helix hairpin bin"/>
    <property type="match status" value="1"/>
</dbReference>
<dbReference type="Gene3D" id="3.55.30.10">
    <property type="entry name" value="Hsp33 domain"/>
    <property type="match status" value="1"/>
</dbReference>
<dbReference type="Gene3D" id="3.90.1280.10">
    <property type="entry name" value="HSP33 redox switch-like"/>
    <property type="match status" value="1"/>
</dbReference>
<dbReference type="HAMAP" id="MF_00117">
    <property type="entry name" value="HslO"/>
    <property type="match status" value="1"/>
</dbReference>
<dbReference type="InterPro" id="IPR000397">
    <property type="entry name" value="Heat_shock_Hsp33"/>
</dbReference>
<dbReference type="InterPro" id="IPR016154">
    <property type="entry name" value="Heat_shock_Hsp33_C"/>
</dbReference>
<dbReference type="InterPro" id="IPR016153">
    <property type="entry name" value="Heat_shock_Hsp33_N"/>
</dbReference>
<dbReference type="InterPro" id="IPR023212">
    <property type="entry name" value="Hsp33_helix_hairpin_bin_dom_sf"/>
</dbReference>
<dbReference type="NCBIfam" id="NF001033">
    <property type="entry name" value="PRK00114.1"/>
    <property type="match status" value="1"/>
</dbReference>
<dbReference type="PANTHER" id="PTHR30111">
    <property type="entry name" value="33 KDA CHAPERONIN"/>
    <property type="match status" value="1"/>
</dbReference>
<dbReference type="PANTHER" id="PTHR30111:SF1">
    <property type="entry name" value="33 KDA CHAPERONIN"/>
    <property type="match status" value="1"/>
</dbReference>
<dbReference type="Pfam" id="PF01430">
    <property type="entry name" value="HSP33"/>
    <property type="match status" value="1"/>
</dbReference>
<dbReference type="PIRSF" id="PIRSF005261">
    <property type="entry name" value="Heat_shock_Hsp33"/>
    <property type="match status" value="1"/>
</dbReference>
<dbReference type="SUPFAM" id="SSF64397">
    <property type="entry name" value="Hsp33 domain"/>
    <property type="match status" value="1"/>
</dbReference>
<dbReference type="SUPFAM" id="SSF118352">
    <property type="entry name" value="HSP33 redox switch-like"/>
    <property type="match status" value="1"/>
</dbReference>
<keyword id="KW-0143">Chaperone</keyword>
<keyword id="KW-0963">Cytoplasm</keyword>
<keyword id="KW-1015">Disulfide bond</keyword>
<keyword id="KW-0676">Redox-active center</keyword>
<keyword id="KW-0862">Zinc</keyword>
<feature type="chain" id="PRO_0000238085" description="33 kDa chaperonin">
    <location>
        <begin position="1"/>
        <end position="300"/>
    </location>
</feature>
<feature type="disulfide bond" description="Redox-active" evidence="1">
    <location>
        <begin position="235"/>
        <end position="237"/>
    </location>
</feature>
<feature type="disulfide bond" description="Redox-active" evidence="1">
    <location>
        <begin position="269"/>
        <end position="272"/>
    </location>
</feature>
<proteinExistence type="inferred from homology"/>
<accession>Q48BY8</accession>
<comment type="function">
    <text evidence="1">Redox regulated molecular chaperone. Protects both thermally unfolding and oxidatively damaged proteins from irreversible aggregation. Plays an important role in the bacterial defense system toward oxidative stress.</text>
</comment>
<comment type="subcellular location">
    <subcellularLocation>
        <location evidence="1">Cytoplasm</location>
    </subcellularLocation>
</comment>
<comment type="PTM">
    <text evidence="1">Under oxidizing conditions two disulfide bonds are formed involving the reactive cysteines. Under reducing conditions zinc is bound to the reactive cysteines and the protein is inactive.</text>
</comment>
<comment type="similarity">
    <text evidence="1">Belongs to the HSP33 family.</text>
</comment>
<reference key="1">
    <citation type="journal article" date="2005" name="J. Bacteriol.">
        <title>Whole-genome sequence analysis of Pseudomonas syringae pv. phaseolicola 1448A reveals divergence among pathovars in genes involved in virulence and transposition.</title>
        <authorList>
            <person name="Joardar V."/>
            <person name="Lindeberg M."/>
            <person name="Jackson R.W."/>
            <person name="Selengut J."/>
            <person name="Dodson R."/>
            <person name="Brinkac L.M."/>
            <person name="Daugherty S.C."/>
            <person name="DeBoy R.T."/>
            <person name="Durkin A.S."/>
            <person name="Gwinn Giglio M."/>
            <person name="Madupu R."/>
            <person name="Nelson W.C."/>
            <person name="Rosovitz M.J."/>
            <person name="Sullivan S.A."/>
            <person name="Crabtree J."/>
            <person name="Creasy T."/>
            <person name="Davidsen T.M."/>
            <person name="Haft D.H."/>
            <person name="Zafar N."/>
            <person name="Zhou L."/>
            <person name="Halpin R."/>
            <person name="Holley T."/>
            <person name="Khouri H.M."/>
            <person name="Feldblyum T.V."/>
            <person name="White O."/>
            <person name="Fraser C.M."/>
            <person name="Chatterjee A.K."/>
            <person name="Cartinhour S."/>
            <person name="Schneider D."/>
            <person name="Mansfield J.W."/>
            <person name="Collmer A."/>
            <person name="Buell R."/>
        </authorList>
    </citation>
    <scope>NUCLEOTIDE SEQUENCE [LARGE SCALE GENOMIC DNA]</scope>
    <source>
        <strain>1448A / Race 6</strain>
    </source>
</reference>
<sequence length="300" mass="33199">MHDLPDTDFTQRFIFDESDVRGELVALERSYAEVLAKHPYPEPVAQLLGELMAAAALLVGTLKFDGLLILQARSSGAVPLLMVECSSERELRGIARYDETLITPDAGLQDLMPDGSLALTVDPHKGKRYQGIVALDGVDLSESLSNYFVMSEQLGTRFWLKADGHRARGLLLQQLPAAQITDPEERDASWEHVITLASTLTAEEMLGLDNQTILHRLYHEDPVRLFDAQPICFRCSCSRERSANALVSLGLEDAQQLVIEHNGSIEIDCQFCNERYLFDATDVAQLFAGGGVDSPSDTRH</sequence>
<name>HSLO_PSE14</name>
<protein>
    <recommendedName>
        <fullName evidence="1">33 kDa chaperonin</fullName>
    </recommendedName>
    <alternativeName>
        <fullName evidence="1">Heat shock protein 33 homolog</fullName>
        <shortName evidence="1">HSP33</shortName>
    </alternativeName>
</protein>
<gene>
    <name evidence="1" type="primary">hslO</name>
    <name type="ordered locus">PSPPH_5021</name>
</gene>
<evidence type="ECO:0000255" key="1">
    <source>
        <dbReference type="HAMAP-Rule" id="MF_00117"/>
    </source>
</evidence>
<organism>
    <name type="scientific">Pseudomonas savastanoi pv. phaseolicola (strain 1448A / Race 6)</name>
    <name type="common">Pseudomonas syringae pv. phaseolicola (strain 1448A / Race 6)</name>
    <dbReference type="NCBI Taxonomy" id="264730"/>
    <lineage>
        <taxon>Bacteria</taxon>
        <taxon>Pseudomonadati</taxon>
        <taxon>Pseudomonadota</taxon>
        <taxon>Gammaproteobacteria</taxon>
        <taxon>Pseudomonadales</taxon>
        <taxon>Pseudomonadaceae</taxon>
        <taxon>Pseudomonas</taxon>
    </lineage>
</organism>